<proteinExistence type="inferred from homology"/>
<protein>
    <recommendedName>
        <fullName evidence="1">Guanylate kinase</fullName>
        <ecNumber evidence="1">2.7.4.8</ecNumber>
    </recommendedName>
    <alternativeName>
        <fullName evidence="1">GMP kinase</fullName>
    </alternativeName>
</protein>
<comment type="function">
    <text evidence="1">Essential for recycling GMP and indirectly, cGMP.</text>
</comment>
<comment type="catalytic activity">
    <reaction evidence="1">
        <text>GMP + ATP = GDP + ADP</text>
        <dbReference type="Rhea" id="RHEA:20780"/>
        <dbReference type="ChEBI" id="CHEBI:30616"/>
        <dbReference type="ChEBI" id="CHEBI:58115"/>
        <dbReference type="ChEBI" id="CHEBI:58189"/>
        <dbReference type="ChEBI" id="CHEBI:456216"/>
        <dbReference type="EC" id="2.7.4.8"/>
    </reaction>
</comment>
<comment type="subcellular location">
    <subcellularLocation>
        <location evidence="1">Cytoplasm</location>
    </subcellularLocation>
</comment>
<comment type="similarity">
    <text evidence="1">Belongs to the guanylate kinase family.</text>
</comment>
<evidence type="ECO:0000255" key="1">
    <source>
        <dbReference type="HAMAP-Rule" id="MF_00328"/>
    </source>
</evidence>
<keyword id="KW-0067">ATP-binding</keyword>
<keyword id="KW-0963">Cytoplasm</keyword>
<keyword id="KW-0418">Kinase</keyword>
<keyword id="KW-0547">Nucleotide-binding</keyword>
<keyword id="KW-1185">Reference proteome</keyword>
<keyword id="KW-0808">Transferase</keyword>
<feature type="chain" id="PRO_0000266362" description="Guanylate kinase">
    <location>
        <begin position="1"/>
        <end position="221"/>
    </location>
</feature>
<feature type="domain" description="Guanylate kinase-like" evidence="1">
    <location>
        <begin position="20"/>
        <end position="199"/>
    </location>
</feature>
<feature type="binding site" evidence="1">
    <location>
        <begin position="27"/>
        <end position="34"/>
    </location>
    <ligand>
        <name>ATP</name>
        <dbReference type="ChEBI" id="CHEBI:30616"/>
    </ligand>
</feature>
<gene>
    <name evidence="1" type="primary">gmk</name>
    <name type="ordered locus">Saro_1003</name>
</gene>
<name>KGUA_NOVAD</name>
<accession>Q2G9M5</accession>
<reference key="1">
    <citation type="submission" date="2006-01" db="EMBL/GenBank/DDBJ databases">
        <title>Complete sequence of Novosphingobium aromaticivorans DSM 12444.</title>
        <authorList>
            <consortium name="US DOE Joint Genome Institute"/>
            <person name="Copeland A."/>
            <person name="Lucas S."/>
            <person name="Lapidus A."/>
            <person name="Barry K."/>
            <person name="Detter J.C."/>
            <person name="Glavina T."/>
            <person name="Hammon N."/>
            <person name="Israni S."/>
            <person name="Pitluck S."/>
            <person name="Chain P."/>
            <person name="Malfatti S."/>
            <person name="Shin M."/>
            <person name="Vergez L."/>
            <person name="Schmutz J."/>
            <person name="Larimer F."/>
            <person name="Land M."/>
            <person name="Kyrpides N."/>
            <person name="Ivanova N."/>
            <person name="Fredrickson J."/>
            <person name="Balkwill D."/>
            <person name="Romine M.F."/>
            <person name="Richardson P."/>
        </authorList>
    </citation>
    <scope>NUCLEOTIDE SEQUENCE [LARGE SCALE GENOMIC DNA]</scope>
    <source>
        <strain>ATCC 700278 / DSM 12444 / CCUG 56034 / CIP 105152 / NBRC 16084 / F199</strain>
    </source>
</reference>
<organism>
    <name type="scientific">Novosphingobium aromaticivorans (strain ATCC 700278 / DSM 12444 / CCUG 56034 / CIP 105152 / NBRC 16084 / F199)</name>
    <dbReference type="NCBI Taxonomy" id="279238"/>
    <lineage>
        <taxon>Bacteria</taxon>
        <taxon>Pseudomonadati</taxon>
        <taxon>Pseudomonadota</taxon>
        <taxon>Alphaproteobacteria</taxon>
        <taxon>Sphingomonadales</taxon>
        <taxon>Sphingomonadaceae</taxon>
        <taxon>Novosphingobium</taxon>
    </lineage>
</organism>
<dbReference type="EC" id="2.7.4.8" evidence="1"/>
<dbReference type="EMBL" id="CP000248">
    <property type="protein sequence ID" value="ABD25448.1"/>
    <property type="molecule type" value="Genomic_DNA"/>
</dbReference>
<dbReference type="RefSeq" id="WP_011444662.1">
    <property type="nucleotide sequence ID" value="NC_007794.1"/>
</dbReference>
<dbReference type="SMR" id="Q2G9M5"/>
<dbReference type="STRING" id="279238.Saro_1003"/>
<dbReference type="KEGG" id="nar:Saro_1003"/>
<dbReference type="eggNOG" id="COG0194">
    <property type="taxonomic scope" value="Bacteria"/>
</dbReference>
<dbReference type="HOGENOM" id="CLU_001715_1_0_5"/>
<dbReference type="Proteomes" id="UP000009134">
    <property type="component" value="Chromosome"/>
</dbReference>
<dbReference type="GO" id="GO:0005829">
    <property type="term" value="C:cytosol"/>
    <property type="evidence" value="ECO:0007669"/>
    <property type="project" value="TreeGrafter"/>
</dbReference>
<dbReference type="GO" id="GO:0005524">
    <property type="term" value="F:ATP binding"/>
    <property type="evidence" value="ECO:0007669"/>
    <property type="project" value="UniProtKB-UniRule"/>
</dbReference>
<dbReference type="GO" id="GO:0004385">
    <property type="term" value="F:guanylate kinase activity"/>
    <property type="evidence" value="ECO:0007669"/>
    <property type="project" value="UniProtKB-UniRule"/>
</dbReference>
<dbReference type="CDD" id="cd00071">
    <property type="entry name" value="GMPK"/>
    <property type="match status" value="1"/>
</dbReference>
<dbReference type="FunFam" id="3.30.63.10:FF:000002">
    <property type="entry name" value="Guanylate kinase 1"/>
    <property type="match status" value="1"/>
</dbReference>
<dbReference type="Gene3D" id="3.30.63.10">
    <property type="entry name" value="Guanylate Kinase phosphate binding domain"/>
    <property type="match status" value="1"/>
</dbReference>
<dbReference type="Gene3D" id="3.40.50.300">
    <property type="entry name" value="P-loop containing nucleotide triphosphate hydrolases"/>
    <property type="match status" value="1"/>
</dbReference>
<dbReference type="HAMAP" id="MF_00328">
    <property type="entry name" value="Guanylate_kinase"/>
    <property type="match status" value="1"/>
</dbReference>
<dbReference type="InterPro" id="IPR008145">
    <property type="entry name" value="GK/Ca_channel_bsu"/>
</dbReference>
<dbReference type="InterPro" id="IPR008144">
    <property type="entry name" value="Guanylate_kin-like_dom"/>
</dbReference>
<dbReference type="InterPro" id="IPR017665">
    <property type="entry name" value="Guanylate_kinase"/>
</dbReference>
<dbReference type="InterPro" id="IPR020590">
    <property type="entry name" value="Guanylate_kinase_CS"/>
</dbReference>
<dbReference type="InterPro" id="IPR027417">
    <property type="entry name" value="P-loop_NTPase"/>
</dbReference>
<dbReference type="NCBIfam" id="TIGR03263">
    <property type="entry name" value="guanyl_kin"/>
    <property type="match status" value="1"/>
</dbReference>
<dbReference type="PANTHER" id="PTHR23117:SF13">
    <property type="entry name" value="GUANYLATE KINASE"/>
    <property type="match status" value="1"/>
</dbReference>
<dbReference type="PANTHER" id="PTHR23117">
    <property type="entry name" value="GUANYLATE KINASE-RELATED"/>
    <property type="match status" value="1"/>
</dbReference>
<dbReference type="Pfam" id="PF00625">
    <property type="entry name" value="Guanylate_kin"/>
    <property type="match status" value="1"/>
</dbReference>
<dbReference type="SMART" id="SM00072">
    <property type="entry name" value="GuKc"/>
    <property type="match status" value="1"/>
</dbReference>
<dbReference type="SUPFAM" id="SSF52540">
    <property type="entry name" value="P-loop containing nucleoside triphosphate hydrolases"/>
    <property type="match status" value="1"/>
</dbReference>
<dbReference type="PROSITE" id="PS00856">
    <property type="entry name" value="GUANYLATE_KINASE_1"/>
    <property type="match status" value="1"/>
</dbReference>
<dbReference type="PROSITE" id="PS50052">
    <property type="entry name" value="GUANYLATE_KINASE_2"/>
    <property type="match status" value="1"/>
</dbReference>
<sequence length="221" mass="24883">MAGNPANTESHDDDALHRRGLMFILSSPSGAGKTTIARKLLSEDSEIAMSVSVTTRPMRPGEVDGKDYFFVEPAEFERMVEANEFYEWATVFGNCYGTPKAHIRERLKTGGDVLFDIDWQGTQQLYQKAQADVVRVFILPPSLDELRRRLTGRGTDSAEVIAARMDRAQAEISHWDGYDYVVVNDDVDGCFGKVREILAAERMRRTRQTGLIDFVRGLMRG</sequence>